<gene>
    <name type="primary">hha</name>
    <name type="ordered locus">SL1344_0466</name>
</gene>
<sequence length="72" mass="8614">MSDKPLTKTDYLMRLRRCQTIDTLERVIEKNKYELSDNELAVFYSAADHRLAELTMNKLYDKIPSSVWKFIR</sequence>
<organism>
    <name type="scientific">Salmonella typhimurium (strain SL1344)</name>
    <dbReference type="NCBI Taxonomy" id="216597"/>
    <lineage>
        <taxon>Bacteria</taxon>
        <taxon>Pseudomonadati</taxon>
        <taxon>Pseudomonadota</taxon>
        <taxon>Gammaproteobacteria</taxon>
        <taxon>Enterobacterales</taxon>
        <taxon>Enterobacteriaceae</taxon>
        <taxon>Salmonella</taxon>
    </lineage>
</organism>
<evidence type="ECO:0000250" key="1">
    <source>
        <dbReference type="UniProtKB" id="Q7CR17"/>
    </source>
</evidence>
<evidence type="ECO:0000269" key="2">
    <source>
    </source>
</evidence>
<evidence type="ECO:0000269" key="3">
    <source>
    </source>
</evidence>
<evidence type="ECO:0000305" key="4"/>
<evidence type="ECO:0000305" key="5">
    <source>
    </source>
</evidence>
<name>HHA_SALTS</name>
<comment type="function">
    <text evidence="1 2 5">Binds to H-NS and modifies the range of genes it silences; H-NS alone silences 'core' genes while the H-NS-Hha complex (and presumably also H-NS-YdgT) silences genes acquired by horizontal gene transfer (PubMed:19521501). Plays a role silencing virulence factors in the absence of factors that induce pathogenicity (PubMed:17307861). Probably requires H-NS to bind DNA (By similarity).</text>
</comment>
<comment type="subunit">
    <text evidence="1">Interacts with H-NS (By similarity).</text>
</comment>
<comment type="disruption phenotype">
    <text evidence="2 3">Derepression of pathogenicity island 2 (SPI-2) which is usually repressed in culture; effect is slightly higher in double hha-ydgT deletions (PubMed:17307861). Double hha-ydgT deletion mutants lead to deregulation of many genes at least 2-fold, most of which are also deregulated in an hns deletion, suggesting there are a large number of hns-regulated genes whose expression is also modulated by Hha and/or YdgT (PubMed:19521501). Upon infection of C57BL/6 mice a single hha mutant has 10-100-fold reduced virulence compared to wild-type, while a double hha-ydgT deletion is 6 orders of magnitude less virulent (PubMed:17307861).</text>
</comment>
<comment type="similarity">
    <text evidence="4">Belongs to the Hha/YmoA/Cnu family.</text>
</comment>
<keyword id="KW-0804">Transcription</keyword>
<keyword id="KW-0805">Transcription regulation</keyword>
<keyword id="KW-0843">Virulence</keyword>
<accession>A0A0H3N8G7</accession>
<feature type="chain" id="PRO_0000436899" description="Hemolysin expression-modulating protein Hha">
    <location>
        <begin position="1"/>
        <end position="72"/>
    </location>
</feature>
<dbReference type="EMBL" id="FQ312003">
    <property type="protein sequence ID" value="CBW16567.1"/>
    <property type="molecule type" value="Genomic_DNA"/>
</dbReference>
<dbReference type="RefSeq" id="WP_001280991.1">
    <property type="nucleotide sequence ID" value="NZ_QASL01000002.1"/>
</dbReference>
<dbReference type="SMR" id="A0A0H3N8G7"/>
<dbReference type="KEGG" id="sey:SL1344_0466"/>
<dbReference type="PATRIC" id="fig|216597.6.peg.521"/>
<dbReference type="HOGENOM" id="CLU_190629_0_0_6"/>
<dbReference type="BioCyc" id="SENT216597:SL1344_RS02410-MONOMER"/>
<dbReference type="Proteomes" id="UP000008962">
    <property type="component" value="Chromosome"/>
</dbReference>
<dbReference type="FunFam" id="1.20.1280.40:FF:000001">
    <property type="entry name" value="Hemolysin expression modulator Hha"/>
    <property type="match status" value="1"/>
</dbReference>
<dbReference type="Gene3D" id="1.20.1280.40">
    <property type="entry name" value="HHA"/>
    <property type="match status" value="1"/>
</dbReference>
<dbReference type="InterPro" id="IPR007985">
    <property type="entry name" value="Hemolysn_expr_modulating_HHA"/>
</dbReference>
<dbReference type="InterPro" id="IPR036666">
    <property type="entry name" value="HHA_sf"/>
</dbReference>
<dbReference type="NCBIfam" id="NF008191">
    <property type="entry name" value="PRK10945.1"/>
    <property type="match status" value="1"/>
</dbReference>
<dbReference type="Pfam" id="PF05321">
    <property type="entry name" value="HHA"/>
    <property type="match status" value="1"/>
</dbReference>
<dbReference type="SUPFAM" id="SSF68989">
    <property type="entry name" value="Hemolysin expression modulating protein HHA"/>
    <property type="match status" value="1"/>
</dbReference>
<proteinExistence type="inferred from homology"/>
<protein>
    <recommendedName>
        <fullName>Hemolysin expression-modulating protein Hha</fullName>
    </recommendedName>
</protein>
<reference key="1">
    <citation type="journal article" date="2012" name="Proc. Natl. Acad. Sci. U.S.A.">
        <title>The transcriptional landscape and small RNAs of Salmonella enterica serovar Typhimurium.</title>
        <authorList>
            <person name="Kroger C."/>
            <person name="Dillon S.C."/>
            <person name="Cameron A.D."/>
            <person name="Papenfort K."/>
            <person name="Sivasankaran S.K."/>
            <person name="Hokamp K."/>
            <person name="Chao Y."/>
            <person name="Sittka A."/>
            <person name="Hebrard M."/>
            <person name="Handler K."/>
            <person name="Colgan A."/>
            <person name="Leekitcharoenphon P."/>
            <person name="Langridge G.C."/>
            <person name="Lohan A.J."/>
            <person name="Loftus B."/>
            <person name="Lucchini S."/>
            <person name="Ussery D.W."/>
            <person name="Dorman C.J."/>
            <person name="Thomson N.R."/>
            <person name="Vogel J."/>
            <person name="Hinton J.C."/>
        </authorList>
    </citation>
    <scope>NUCLEOTIDE SEQUENCE [LARGE SCALE GENOMIC DNA]</scope>
    <source>
        <strain>SL1344</strain>
    </source>
</reference>
<reference key="2">
    <citation type="journal article" date="2007" name="J. Bacteriol.">
        <title>Repression of intracellular virulence factors in Salmonella by the Hha and YdgT nucleoid-associated proteins.</title>
        <authorList>
            <person name="Silphaduang U."/>
            <person name="Mascarenhas M."/>
            <person name="Karmali M."/>
            <person name="Coombes B.K."/>
        </authorList>
    </citation>
    <scope>FUNCTION</scope>
    <scope>DISRUPTION PHENOTYPE</scope>
    <source>
        <strain>SL1344</strain>
    </source>
</reference>
<reference key="3">
    <citation type="journal article" date="2009" name="PLoS Genet.">
        <title>Differential regulation of horizontally acquired and core genome genes by the bacterial modulator H-NS.</title>
        <authorList>
            <person name="Banos R.C."/>
            <person name="Vivero A."/>
            <person name="Aznar S."/>
            <person name="Garcia J."/>
            <person name="Pons M."/>
            <person name="Madrid C."/>
            <person name="Juarez A."/>
        </authorList>
    </citation>
    <scope>FUNCTION</scope>
    <scope>DISRUPTION PHENOTYPE</scope>
    <source>
        <strain>SL1344 / SV5015</strain>
    </source>
</reference>